<name>RS15_ZYMMO</name>
<evidence type="ECO:0000255" key="1">
    <source>
        <dbReference type="HAMAP-Rule" id="MF_01343"/>
    </source>
</evidence>
<evidence type="ECO:0000305" key="2"/>
<sequence>MSITAERKEALIKEYARVEGDTGSPEVQVAILTERIVNLTEHFKTHAKDNHSRRGLLRLVNKRRSLLDYVKNNDKDRYSSLIARLGLRK</sequence>
<feature type="chain" id="PRO_0000115600" description="Small ribosomal subunit protein uS15">
    <location>
        <begin position="1"/>
        <end position="89"/>
    </location>
</feature>
<protein>
    <recommendedName>
        <fullName evidence="1">Small ribosomal subunit protein uS15</fullName>
    </recommendedName>
    <alternativeName>
        <fullName evidence="2">30S ribosomal protein S15</fullName>
    </alternativeName>
</protein>
<organism>
    <name type="scientific">Zymomonas mobilis subsp. mobilis (strain ATCC 31821 / ZM4 / CP4)</name>
    <dbReference type="NCBI Taxonomy" id="264203"/>
    <lineage>
        <taxon>Bacteria</taxon>
        <taxon>Pseudomonadati</taxon>
        <taxon>Pseudomonadota</taxon>
        <taxon>Alphaproteobacteria</taxon>
        <taxon>Sphingomonadales</taxon>
        <taxon>Zymomonadaceae</taxon>
        <taxon>Zymomonas</taxon>
    </lineage>
</organism>
<keyword id="KW-1185">Reference proteome</keyword>
<keyword id="KW-0687">Ribonucleoprotein</keyword>
<keyword id="KW-0689">Ribosomal protein</keyword>
<keyword id="KW-0694">RNA-binding</keyword>
<keyword id="KW-0699">rRNA-binding</keyword>
<comment type="function">
    <text evidence="1">One of the primary rRNA binding proteins, it binds directly to 16S rRNA where it helps nucleate assembly of the platform of the 30S subunit by binding and bridging several RNA helices of the 16S rRNA.</text>
</comment>
<comment type="function">
    <text evidence="1">Forms an intersubunit bridge (bridge B4) with the 23S rRNA of the 50S subunit in the ribosome.</text>
</comment>
<comment type="subunit">
    <text evidence="1">Part of the 30S ribosomal subunit. Forms a bridge to the 50S subunit in the 70S ribosome, contacting the 23S rRNA.</text>
</comment>
<comment type="similarity">
    <text evidence="1">Belongs to the universal ribosomal protein uS15 family.</text>
</comment>
<proteinExistence type="inferred from homology"/>
<reference key="1">
    <citation type="journal article" date="2005" name="Nat. Biotechnol.">
        <title>The genome sequence of the ethanologenic bacterium Zymomonas mobilis ZM4.</title>
        <authorList>
            <person name="Seo J.-S."/>
            <person name="Chong H."/>
            <person name="Park H.S."/>
            <person name="Yoon K.-O."/>
            <person name="Jung C."/>
            <person name="Kim J.J."/>
            <person name="Hong J.H."/>
            <person name="Kim H."/>
            <person name="Kim J.-H."/>
            <person name="Kil J.-I."/>
            <person name="Park C.J."/>
            <person name="Oh H.-M."/>
            <person name="Lee J.-S."/>
            <person name="Jin S.-J."/>
            <person name="Um H.-W."/>
            <person name="Lee H.-J."/>
            <person name="Oh S.-J."/>
            <person name="Kim J.Y."/>
            <person name="Kang H.L."/>
            <person name="Lee S.Y."/>
            <person name="Lee K.J."/>
            <person name="Kang H.S."/>
        </authorList>
    </citation>
    <scope>NUCLEOTIDE SEQUENCE [LARGE SCALE GENOMIC DNA]</scope>
    <source>
        <strain>ATCC 31821 / ZM4 / CP4</strain>
    </source>
</reference>
<dbReference type="EMBL" id="AE008692">
    <property type="protein sequence ID" value="AAV89174.1"/>
    <property type="molecule type" value="Genomic_DNA"/>
</dbReference>
<dbReference type="RefSeq" id="WP_011240456.1">
    <property type="nucleotide sequence ID" value="NZ_CP035711.1"/>
</dbReference>
<dbReference type="SMR" id="Q5NQ31"/>
<dbReference type="STRING" id="264203.ZMO0550"/>
<dbReference type="GeneID" id="79904258"/>
<dbReference type="KEGG" id="zmo:ZMO0550"/>
<dbReference type="eggNOG" id="COG0184">
    <property type="taxonomic scope" value="Bacteria"/>
</dbReference>
<dbReference type="HOGENOM" id="CLU_148518_0_0_5"/>
<dbReference type="Proteomes" id="UP000001173">
    <property type="component" value="Chromosome"/>
</dbReference>
<dbReference type="GO" id="GO:0022627">
    <property type="term" value="C:cytosolic small ribosomal subunit"/>
    <property type="evidence" value="ECO:0007669"/>
    <property type="project" value="TreeGrafter"/>
</dbReference>
<dbReference type="GO" id="GO:0019843">
    <property type="term" value="F:rRNA binding"/>
    <property type="evidence" value="ECO:0007669"/>
    <property type="project" value="UniProtKB-UniRule"/>
</dbReference>
<dbReference type="GO" id="GO:0003735">
    <property type="term" value="F:structural constituent of ribosome"/>
    <property type="evidence" value="ECO:0007669"/>
    <property type="project" value="InterPro"/>
</dbReference>
<dbReference type="GO" id="GO:0006412">
    <property type="term" value="P:translation"/>
    <property type="evidence" value="ECO:0007669"/>
    <property type="project" value="UniProtKB-UniRule"/>
</dbReference>
<dbReference type="CDD" id="cd00353">
    <property type="entry name" value="Ribosomal_S15p_S13e"/>
    <property type="match status" value="1"/>
</dbReference>
<dbReference type="FunFam" id="1.10.287.10:FF:000002">
    <property type="entry name" value="30S ribosomal protein S15"/>
    <property type="match status" value="1"/>
</dbReference>
<dbReference type="Gene3D" id="6.10.250.3130">
    <property type="match status" value="1"/>
</dbReference>
<dbReference type="Gene3D" id="1.10.287.10">
    <property type="entry name" value="S15/NS1, RNA-binding"/>
    <property type="match status" value="1"/>
</dbReference>
<dbReference type="HAMAP" id="MF_01343_B">
    <property type="entry name" value="Ribosomal_uS15_B"/>
    <property type="match status" value="1"/>
</dbReference>
<dbReference type="InterPro" id="IPR000589">
    <property type="entry name" value="Ribosomal_uS15"/>
</dbReference>
<dbReference type="InterPro" id="IPR005290">
    <property type="entry name" value="Ribosomal_uS15_bac-type"/>
</dbReference>
<dbReference type="InterPro" id="IPR009068">
    <property type="entry name" value="uS15_NS1_RNA-bd_sf"/>
</dbReference>
<dbReference type="NCBIfam" id="TIGR00952">
    <property type="entry name" value="S15_bact"/>
    <property type="match status" value="1"/>
</dbReference>
<dbReference type="PANTHER" id="PTHR23321">
    <property type="entry name" value="RIBOSOMAL PROTEIN S15, BACTERIAL AND ORGANELLAR"/>
    <property type="match status" value="1"/>
</dbReference>
<dbReference type="PANTHER" id="PTHR23321:SF26">
    <property type="entry name" value="SMALL RIBOSOMAL SUBUNIT PROTEIN US15M"/>
    <property type="match status" value="1"/>
</dbReference>
<dbReference type="Pfam" id="PF00312">
    <property type="entry name" value="Ribosomal_S15"/>
    <property type="match status" value="1"/>
</dbReference>
<dbReference type="SMART" id="SM01387">
    <property type="entry name" value="Ribosomal_S15"/>
    <property type="match status" value="1"/>
</dbReference>
<dbReference type="SUPFAM" id="SSF47060">
    <property type="entry name" value="S15/NS1 RNA-binding domain"/>
    <property type="match status" value="1"/>
</dbReference>
<dbReference type="PROSITE" id="PS00362">
    <property type="entry name" value="RIBOSOMAL_S15"/>
    <property type="match status" value="1"/>
</dbReference>
<gene>
    <name evidence="1" type="primary">rpsO</name>
    <name type="ordered locus">ZMO0550</name>
</gene>
<accession>Q5NQ31</accession>